<comment type="function">
    <text evidence="1">Catalyzes the reversible conversion of ribose-5-phosphate to ribulose 5-phosphate.</text>
</comment>
<comment type="catalytic activity">
    <reaction evidence="1">
        <text>aldehydo-D-ribose 5-phosphate = D-ribulose 5-phosphate</text>
        <dbReference type="Rhea" id="RHEA:14657"/>
        <dbReference type="ChEBI" id="CHEBI:58121"/>
        <dbReference type="ChEBI" id="CHEBI:58273"/>
        <dbReference type="EC" id="5.3.1.6"/>
    </reaction>
</comment>
<comment type="pathway">
    <text evidence="1">Carbohydrate degradation; pentose phosphate pathway; D-ribose 5-phosphate from D-ribulose 5-phosphate (non-oxidative stage): step 1/1.</text>
</comment>
<comment type="subunit">
    <text evidence="1">Homodimer.</text>
</comment>
<comment type="similarity">
    <text evidence="1">Belongs to the ribose 5-phosphate isomerase family.</text>
</comment>
<name>RPIA_PSESM</name>
<feature type="chain" id="PRO_0000158452" description="Ribose-5-phosphate isomerase A">
    <location>
        <begin position="1"/>
        <end position="223"/>
    </location>
</feature>
<feature type="active site" description="Proton acceptor" evidence="1">
    <location>
        <position position="107"/>
    </location>
</feature>
<feature type="binding site" evidence="1">
    <location>
        <begin position="32"/>
        <end position="35"/>
    </location>
    <ligand>
        <name>substrate</name>
    </ligand>
</feature>
<feature type="binding site" evidence="1">
    <location>
        <begin position="85"/>
        <end position="88"/>
    </location>
    <ligand>
        <name>substrate</name>
    </ligand>
</feature>
<feature type="binding site" evidence="1">
    <location>
        <begin position="98"/>
        <end position="101"/>
    </location>
    <ligand>
        <name>substrate</name>
    </ligand>
</feature>
<feature type="binding site" evidence="1">
    <location>
        <position position="125"/>
    </location>
    <ligand>
        <name>substrate</name>
    </ligand>
</feature>
<dbReference type="EC" id="5.3.1.6" evidence="1"/>
<dbReference type="EMBL" id="AE016853">
    <property type="protein sequence ID" value="AAO58715.1"/>
    <property type="molecule type" value="Genomic_DNA"/>
</dbReference>
<dbReference type="RefSeq" id="NP_795020.1">
    <property type="nucleotide sequence ID" value="NC_004578.1"/>
</dbReference>
<dbReference type="RefSeq" id="WP_007247432.1">
    <property type="nucleotide sequence ID" value="NC_004578.1"/>
</dbReference>
<dbReference type="SMR" id="Q87UK7"/>
<dbReference type="STRING" id="223283.PSPTO_5289"/>
<dbReference type="GeneID" id="61789809"/>
<dbReference type="KEGG" id="pst:PSPTO_5289"/>
<dbReference type="PATRIC" id="fig|223283.9.peg.5415"/>
<dbReference type="eggNOG" id="COG0120">
    <property type="taxonomic scope" value="Bacteria"/>
</dbReference>
<dbReference type="HOGENOM" id="CLU_056590_1_1_6"/>
<dbReference type="OrthoDB" id="5870696at2"/>
<dbReference type="PhylomeDB" id="Q87UK7"/>
<dbReference type="UniPathway" id="UPA00115">
    <property type="reaction ID" value="UER00412"/>
</dbReference>
<dbReference type="Proteomes" id="UP000002515">
    <property type="component" value="Chromosome"/>
</dbReference>
<dbReference type="GO" id="GO:0005829">
    <property type="term" value="C:cytosol"/>
    <property type="evidence" value="ECO:0007669"/>
    <property type="project" value="TreeGrafter"/>
</dbReference>
<dbReference type="GO" id="GO:0004751">
    <property type="term" value="F:ribose-5-phosphate isomerase activity"/>
    <property type="evidence" value="ECO:0007669"/>
    <property type="project" value="UniProtKB-UniRule"/>
</dbReference>
<dbReference type="GO" id="GO:0006014">
    <property type="term" value="P:D-ribose metabolic process"/>
    <property type="evidence" value="ECO:0007669"/>
    <property type="project" value="TreeGrafter"/>
</dbReference>
<dbReference type="GO" id="GO:0009052">
    <property type="term" value="P:pentose-phosphate shunt, non-oxidative branch"/>
    <property type="evidence" value="ECO:0007669"/>
    <property type="project" value="UniProtKB-UniRule"/>
</dbReference>
<dbReference type="CDD" id="cd01398">
    <property type="entry name" value="RPI_A"/>
    <property type="match status" value="1"/>
</dbReference>
<dbReference type="FunFam" id="3.30.70.260:FF:000004">
    <property type="entry name" value="Ribose-5-phosphate isomerase A"/>
    <property type="match status" value="1"/>
</dbReference>
<dbReference type="FunFam" id="3.40.50.1360:FF:000001">
    <property type="entry name" value="Ribose-5-phosphate isomerase A"/>
    <property type="match status" value="1"/>
</dbReference>
<dbReference type="Gene3D" id="3.30.70.260">
    <property type="match status" value="1"/>
</dbReference>
<dbReference type="Gene3D" id="3.40.50.1360">
    <property type="match status" value="1"/>
</dbReference>
<dbReference type="HAMAP" id="MF_00170">
    <property type="entry name" value="Rib_5P_isom_A"/>
    <property type="match status" value="1"/>
</dbReference>
<dbReference type="InterPro" id="IPR037171">
    <property type="entry name" value="NagB/RpiA_transferase-like"/>
</dbReference>
<dbReference type="InterPro" id="IPR020672">
    <property type="entry name" value="Ribose5P_isomerase_typA_subgr"/>
</dbReference>
<dbReference type="InterPro" id="IPR004788">
    <property type="entry name" value="Ribose5P_isomerase_type_A"/>
</dbReference>
<dbReference type="NCBIfam" id="NF001924">
    <property type="entry name" value="PRK00702.1"/>
    <property type="match status" value="1"/>
</dbReference>
<dbReference type="NCBIfam" id="TIGR00021">
    <property type="entry name" value="rpiA"/>
    <property type="match status" value="1"/>
</dbReference>
<dbReference type="PANTHER" id="PTHR11934">
    <property type="entry name" value="RIBOSE-5-PHOSPHATE ISOMERASE"/>
    <property type="match status" value="1"/>
</dbReference>
<dbReference type="PANTHER" id="PTHR11934:SF0">
    <property type="entry name" value="RIBOSE-5-PHOSPHATE ISOMERASE"/>
    <property type="match status" value="1"/>
</dbReference>
<dbReference type="Pfam" id="PF06026">
    <property type="entry name" value="Rib_5-P_isom_A"/>
    <property type="match status" value="1"/>
</dbReference>
<dbReference type="SUPFAM" id="SSF75445">
    <property type="entry name" value="D-ribose-5-phosphate isomerase (RpiA), lid domain"/>
    <property type="match status" value="1"/>
</dbReference>
<dbReference type="SUPFAM" id="SSF100950">
    <property type="entry name" value="NagB/RpiA/CoA transferase-like"/>
    <property type="match status" value="1"/>
</dbReference>
<organism>
    <name type="scientific">Pseudomonas syringae pv. tomato (strain ATCC BAA-871 / DC3000)</name>
    <dbReference type="NCBI Taxonomy" id="223283"/>
    <lineage>
        <taxon>Bacteria</taxon>
        <taxon>Pseudomonadati</taxon>
        <taxon>Pseudomonadota</taxon>
        <taxon>Gammaproteobacteria</taxon>
        <taxon>Pseudomonadales</taxon>
        <taxon>Pseudomonadaceae</taxon>
        <taxon>Pseudomonas</taxon>
    </lineage>
</organism>
<evidence type="ECO:0000255" key="1">
    <source>
        <dbReference type="HAMAP-Rule" id="MF_00170"/>
    </source>
</evidence>
<keyword id="KW-0413">Isomerase</keyword>
<keyword id="KW-1185">Reference proteome</keyword>
<accession>Q87UK7</accession>
<protein>
    <recommendedName>
        <fullName evidence="1">Ribose-5-phosphate isomerase A</fullName>
        <ecNumber evidence="1">5.3.1.6</ecNumber>
    </recommendedName>
    <alternativeName>
        <fullName evidence="1">Phosphoriboisomerase A</fullName>
        <shortName evidence="1">PRI</shortName>
    </alternativeName>
</protein>
<proteinExistence type="inferred from homology"/>
<reference key="1">
    <citation type="journal article" date="2003" name="Proc. Natl. Acad. Sci. U.S.A.">
        <title>The complete genome sequence of the Arabidopsis and tomato pathogen Pseudomonas syringae pv. tomato DC3000.</title>
        <authorList>
            <person name="Buell C.R."/>
            <person name="Joardar V."/>
            <person name="Lindeberg M."/>
            <person name="Selengut J."/>
            <person name="Paulsen I.T."/>
            <person name="Gwinn M.L."/>
            <person name="Dodson R.J."/>
            <person name="DeBoy R.T."/>
            <person name="Durkin A.S."/>
            <person name="Kolonay J.F."/>
            <person name="Madupu R."/>
            <person name="Daugherty S.C."/>
            <person name="Brinkac L.M."/>
            <person name="Beanan M.J."/>
            <person name="Haft D.H."/>
            <person name="Nelson W.C."/>
            <person name="Davidsen T.M."/>
            <person name="Zafar N."/>
            <person name="Zhou L."/>
            <person name="Liu J."/>
            <person name="Yuan Q."/>
            <person name="Khouri H.M."/>
            <person name="Fedorova N.B."/>
            <person name="Tran B."/>
            <person name="Russell D."/>
            <person name="Berry K.J."/>
            <person name="Utterback T.R."/>
            <person name="Van Aken S.E."/>
            <person name="Feldblyum T.V."/>
            <person name="D'Ascenzo M."/>
            <person name="Deng W.-L."/>
            <person name="Ramos A.R."/>
            <person name="Alfano J.R."/>
            <person name="Cartinhour S."/>
            <person name="Chatterjee A.K."/>
            <person name="Delaney T.P."/>
            <person name="Lazarowitz S.G."/>
            <person name="Martin G.B."/>
            <person name="Schneider D.J."/>
            <person name="Tang X."/>
            <person name="Bender C.L."/>
            <person name="White O."/>
            <person name="Fraser C.M."/>
            <person name="Collmer A."/>
        </authorList>
    </citation>
    <scope>NUCLEOTIDE SEQUENCE [LARGE SCALE GENOMIC DNA]</scope>
    <source>
        <strain>ATCC BAA-871 / DC3000</strain>
    </source>
</reference>
<sequence>MTQDQLKQAVAQAAVDFILPKLDDKSIVGVGTGSTANCFIDALAKHKGAFDGAVASSEATAARLKGHGIPVYELNTVSDLEFYVDGADESDEHLNLIKGGGAALTREKIVAAVAKTFICIADGSKLVPVLGAFPLPVEVVPMARSHVARQLVKLGGDPVYREGVLTDNGNIIIDVHNMSITNPVELEASINAIVGVVTNGLFAARPADLLLLGTAEGVKTLTR</sequence>
<gene>
    <name evidence="1" type="primary">rpiA</name>
    <name type="ordered locus">PSPTO_5289</name>
</gene>